<evidence type="ECO:0000250" key="1">
    <source>
        <dbReference type="UniProtKB" id="D1L2Z4"/>
    </source>
</evidence>
<evidence type="ECO:0000269" key="2">
    <source>
    </source>
</evidence>
<evidence type="ECO:0000305" key="3"/>
<name>ANCHR_BPKNT</name>
<comment type="function">
    <text evidence="2">Anchors indirectly the receptor binding (RBP) protein (depolymerase) to the virion.</text>
</comment>
<comment type="subcellular location">
    <subcellularLocation>
        <location evidence="3">Virion</location>
    </subcellularLocation>
</comment>
<reference key="1">
    <citation type="submission" date="2012-05" db="EMBL/GenBank/DDBJ databases">
        <title>Development of a bacteriophage/glycosidase system for capsular typing of Klebsiella pneumoniae.</title>
        <authorList>
            <person name="Lin T."/>
            <person name="Pan Y."/>
            <person name="Hsieh P."/>
            <person name="Wu M."/>
            <person name="Hsu C."/>
            <person name="Wang J."/>
        </authorList>
    </citation>
    <scope>NUCLEOTIDE SEQUENCE [LARGE SCALE GENOMIC DNA]</scope>
</reference>
<reference key="2">
    <citation type="journal article" date="2014" name="J. Infect. Dis.">
        <title>Isolation of a bacteriophage and its depolymerase specific for K1 capsule of Klebsiella pneumoniae: implication in typing and treatment.</title>
        <authorList>
            <person name="Lin T.L."/>
            <person name="Hsieh P.F."/>
            <person name="Huang Y.T."/>
            <person name="Lee W.C."/>
            <person name="Tsai Y.T."/>
            <person name="Su P.A."/>
            <person name="Pan Y.J."/>
            <person name="Hsu C.R."/>
            <person name="Wu M.C."/>
            <person name="Wang J.T."/>
        </authorList>
    </citation>
    <scope>FUNCTION</scope>
</reference>
<reference key="3">
    <citation type="journal article" date="2019" name="Front. Microbiol.">
        <title>Modeling the Architecture of Depolymerase-Containing Receptor Binding Proteins in Klebsiella Phages.</title>
        <authorList>
            <person name="Latka A."/>
            <person name="Leiman P.G."/>
            <person name="Drulis-Kawa Z."/>
            <person name="Briers Y."/>
        </authorList>
    </citation>
    <scope>REVIEW</scope>
</reference>
<keyword id="KW-1185">Reference proteome</keyword>
<keyword id="KW-1227">Viral tail protein</keyword>
<keyword id="KW-0946">Virion</keyword>
<organismHost>
    <name type="scientific">Klebsiella pneumoniae</name>
    <dbReference type="NCBI Taxonomy" id="573"/>
</organismHost>
<organism>
    <name type="scientific">Klebsiella phage NTUH-K2044-K1-1</name>
    <name type="common">Bacteriophage NTUH-K2044-K1-1</name>
    <dbReference type="NCBI Taxonomy" id="1194091"/>
    <lineage>
        <taxon>Viruses</taxon>
        <taxon>Duplodnaviria</taxon>
        <taxon>Heunggongvirae</taxon>
        <taxon>Uroviricota</taxon>
        <taxon>Caudoviricetes</taxon>
        <taxon>Autographiviridae</taxon>
        <taxon>Slopekvirinae</taxon>
        <taxon>Drulisvirus</taxon>
        <taxon>Drulisvirus K244</taxon>
    </lineage>
</organism>
<protein>
    <recommendedName>
        <fullName evidence="1">Anchor protein</fullName>
    </recommendedName>
    <alternativeName>
        <fullName evidence="3">Gene product 28</fullName>
        <shortName evidence="3">gp28</shortName>
    </alternativeName>
</protein>
<dbReference type="EMBL" id="AB716666">
    <property type="protein sequence ID" value="BAP15740.1"/>
    <property type="molecule type" value="Genomic_DNA"/>
</dbReference>
<dbReference type="RefSeq" id="YP_009098379.1">
    <property type="nucleotide sequence ID" value="NC_025418.1"/>
</dbReference>
<dbReference type="SMR" id="A0A068Q6B2"/>
<dbReference type="GeneID" id="22276643"/>
<dbReference type="KEGG" id="vg:22276643"/>
<dbReference type="OrthoDB" id="5710at10239"/>
<dbReference type="Proteomes" id="UP000027480">
    <property type="component" value="Genome"/>
</dbReference>
<dbReference type="GO" id="GO:0098015">
    <property type="term" value="C:virus tail"/>
    <property type="evidence" value="ECO:0007669"/>
    <property type="project" value="UniProtKB-KW"/>
</dbReference>
<dbReference type="InterPro" id="IPR005604">
    <property type="entry name" value="Phage_T7_tail_fibre-like_N"/>
</dbReference>
<dbReference type="Pfam" id="PF03906">
    <property type="entry name" value="Phage_T7_tail"/>
    <property type="match status" value="1"/>
</dbReference>
<feature type="chain" id="PRO_0000458726" description="Anchor protein">
    <location>
        <begin position="1"/>
        <end position="318"/>
    </location>
</feature>
<proteinExistence type="predicted"/>
<accession>A0A068Q6B2</accession>
<sequence length="318" mass="33842">MAFSWQEQIKPAGTQDIQCDIEYLDKSYIHVYLDGAETTGYTWTSATNIRLNTALAASTTVLLIRKTEREYLYIEFASGSPFIEVNVDSQNTQFLHLAQELVEGRAIPGFYGTISMNGYRITDLANPINAQDAATKAYVDTADTLLGQRIDAEHSGWVSAVHAEAVTRKAADDALSMRTSALENTFISGVETVSYPWSAVLTAATDEVTPGLAFTKAVVEINGVGQIRGYSFEIVDNTILFAEVLPAGTVVAARLGADVTAGDGFATQASVDYLANSLGDLAYLDKAAAVSDATSTGDVVAKLNALLAALRTSGVLAT</sequence>